<organism>
    <name type="scientific">Mesorhizobium japonicum (strain LMG 29417 / CECT 9101 / MAFF 303099)</name>
    <name type="common">Mesorhizobium loti (strain MAFF 303099)</name>
    <dbReference type="NCBI Taxonomy" id="266835"/>
    <lineage>
        <taxon>Bacteria</taxon>
        <taxon>Pseudomonadati</taxon>
        <taxon>Pseudomonadota</taxon>
        <taxon>Alphaproteobacteria</taxon>
        <taxon>Hyphomicrobiales</taxon>
        <taxon>Phyllobacteriaceae</taxon>
        <taxon>Mesorhizobium</taxon>
    </lineage>
</organism>
<comment type="function">
    <text evidence="1">Plays an important role in the de novo pathway of purine nucleotide biosynthesis. Catalyzes the first committed step in the biosynthesis of AMP from IMP.</text>
</comment>
<comment type="catalytic activity">
    <reaction evidence="1">
        <text>IMP + L-aspartate + GTP = N(6)-(1,2-dicarboxyethyl)-AMP + GDP + phosphate + 2 H(+)</text>
        <dbReference type="Rhea" id="RHEA:15753"/>
        <dbReference type="ChEBI" id="CHEBI:15378"/>
        <dbReference type="ChEBI" id="CHEBI:29991"/>
        <dbReference type="ChEBI" id="CHEBI:37565"/>
        <dbReference type="ChEBI" id="CHEBI:43474"/>
        <dbReference type="ChEBI" id="CHEBI:57567"/>
        <dbReference type="ChEBI" id="CHEBI:58053"/>
        <dbReference type="ChEBI" id="CHEBI:58189"/>
        <dbReference type="EC" id="6.3.4.4"/>
    </reaction>
</comment>
<comment type="cofactor">
    <cofactor evidence="1">
        <name>Mg(2+)</name>
        <dbReference type="ChEBI" id="CHEBI:18420"/>
    </cofactor>
    <text evidence="1">Binds 1 Mg(2+) ion per subunit.</text>
</comment>
<comment type="pathway">
    <text evidence="1">Purine metabolism; AMP biosynthesis via de novo pathway; AMP from IMP: step 1/2.</text>
</comment>
<comment type="subunit">
    <text evidence="1">Homodimer.</text>
</comment>
<comment type="subcellular location">
    <subcellularLocation>
        <location evidence="1">Cytoplasm</location>
    </subcellularLocation>
</comment>
<comment type="similarity">
    <text evidence="1">Belongs to the adenylosuccinate synthetase family.</text>
</comment>
<keyword id="KW-0963">Cytoplasm</keyword>
<keyword id="KW-0342">GTP-binding</keyword>
<keyword id="KW-0436">Ligase</keyword>
<keyword id="KW-0460">Magnesium</keyword>
<keyword id="KW-0479">Metal-binding</keyword>
<keyword id="KW-0547">Nucleotide-binding</keyword>
<keyword id="KW-0658">Purine biosynthesis</keyword>
<accession>Q98F97</accession>
<proteinExistence type="inferred from homology"/>
<reference key="1">
    <citation type="journal article" date="2000" name="DNA Res.">
        <title>Complete genome structure of the nitrogen-fixing symbiotic bacterium Mesorhizobium loti.</title>
        <authorList>
            <person name="Kaneko T."/>
            <person name="Nakamura Y."/>
            <person name="Sato S."/>
            <person name="Asamizu E."/>
            <person name="Kato T."/>
            <person name="Sasamoto S."/>
            <person name="Watanabe A."/>
            <person name="Idesawa K."/>
            <person name="Ishikawa A."/>
            <person name="Kawashima K."/>
            <person name="Kimura T."/>
            <person name="Kishida Y."/>
            <person name="Kiyokawa C."/>
            <person name="Kohara M."/>
            <person name="Matsumoto M."/>
            <person name="Matsuno A."/>
            <person name="Mochizuki Y."/>
            <person name="Nakayama S."/>
            <person name="Nakazaki N."/>
            <person name="Shimpo S."/>
            <person name="Sugimoto M."/>
            <person name="Takeuchi C."/>
            <person name="Yamada M."/>
            <person name="Tabata S."/>
        </authorList>
    </citation>
    <scope>NUCLEOTIDE SEQUENCE [LARGE SCALE GENOMIC DNA]</scope>
    <source>
        <strain>LMG 29417 / CECT 9101 / MAFF 303099</strain>
    </source>
</reference>
<dbReference type="EC" id="6.3.4.4" evidence="1"/>
<dbReference type="EMBL" id="BA000012">
    <property type="protein sequence ID" value="BAB50670.1"/>
    <property type="molecule type" value="Genomic_DNA"/>
</dbReference>
<dbReference type="RefSeq" id="WP_010912013.1">
    <property type="nucleotide sequence ID" value="NC_002678.2"/>
</dbReference>
<dbReference type="SMR" id="Q98F97"/>
<dbReference type="KEGG" id="mlo:mll3873"/>
<dbReference type="eggNOG" id="COG0104">
    <property type="taxonomic scope" value="Bacteria"/>
</dbReference>
<dbReference type="HOGENOM" id="CLU_029848_0_0_5"/>
<dbReference type="UniPathway" id="UPA00075">
    <property type="reaction ID" value="UER00335"/>
</dbReference>
<dbReference type="Proteomes" id="UP000000552">
    <property type="component" value="Chromosome"/>
</dbReference>
<dbReference type="GO" id="GO:0005737">
    <property type="term" value="C:cytoplasm"/>
    <property type="evidence" value="ECO:0007669"/>
    <property type="project" value="UniProtKB-SubCell"/>
</dbReference>
<dbReference type="GO" id="GO:0004019">
    <property type="term" value="F:adenylosuccinate synthase activity"/>
    <property type="evidence" value="ECO:0007669"/>
    <property type="project" value="UniProtKB-UniRule"/>
</dbReference>
<dbReference type="GO" id="GO:0005525">
    <property type="term" value="F:GTP binding"/>
    <property type="evidence" value="ECO:0007669"/>
    <property type="project" value="UniProtKB-UniRule"/>
</dbReference>
<dbReference type="GO" id="GO:0000287">
    <property type="term" value="F:magnesium ion binding"/>
    <property type="evidence" value="ECO:0007669"/>
    <property type="project" value="UniProtKB-UniRule"/>
</dbReference>
<dbReference type="GO" id="GO:0044208">
    <property type="term" value="P:'de novo' AMP biosynthetic process"/>
    <property type="evidence" value="ECO:0007669"/>
    <property type="project" value="UniProtKB-UniRule"/>
</dbReference>
<dbReference type="GO" id="GO:0046040">
    <property type="term" value="P:IMP metabolic process"/>
    <property type="evidence" value="ECO:0007669"/>
    <property type="project" value="TreeGrafter"/>
</dbReference>
<dbReference type="CDD" id="cd03108">
    <property type="entry name" value="AdSS"/>
    <property type="match status" value="1"/>
</dbReference>
<dbReference type="FunFam" id="1.10.300.10:FF:000001">
    <property type="entry name" value="Adenylosuccinate synthetase"/>
    <property type="match status" value="1"/>
</dbReference>
<dbReference type="FunFam" id="3.90.170.10:FF:000001">
    <property type="entry name" value="Adenylosuccinate synthetase"/>
    <property type="match status" value="1"/>
</dbReference>
<dbReference type="Gene3D" id="3.40.440.10">
    <property type="entry name" value="Adenylosuccinate Synthetase, subunit A, domain 1"/>
    <property type="match status" value="1"/>
</dbReference>
<dbReference type="Gene3D" id="1.10.300.10">
    <property type="entry name" value="Adenylosuccinate Synthetase, subunit A, domain 2"/>
    <property type="match status" value="1"/>
</dbReference>
<dbReference type="Gene3D" id="3.90.170.10">
    <property type="entry name" value="Adenylosuccinate Synthetase, subunit A, domain 3"/>
    <property type="match status" value="1"/>
</dbReference>
<dbReference type="HAMAP" id="MF_00011">
    <property type="entry name" value="Adenylosucc_synth"/>
    <property type="match status" value="1"/>
</dbReference>
<dbReference type="InterPro" id="IPR018220">
    <property type="entry name" value="Adenylosuccin_syn_GTP-bd"/>
</dbReference>
<dbReference type="InterPro" id="IPR033128">
    <property type="entry name" value="Adenylosuccin_syn_Lys_AS"/>
</dbReference>
<dbReference type="InterPro" id="IPR042109">
    <property type="entry name" value="Adenylosuccinate_synth_dom1"/>
</dbReference>
<dbReference type="InterPro" id="IPR042110">
    <property type="entry name" value="Adenylosuccinate_synth_dom2"/>
</dbReference>
<dbReference type="InterPro" id="IPR042111">
    <property type="entry name" value="Adenylosuccinate_synth_dom3"/>
</dbReference>
<dbReference type="InterPro" id="IPR001114">
    <property type="entry name" value="Adenylosuccinate_synthetase"/>
</dbReference>
<dbReference type="InterPro" id="IPR027417">
    <property type="entry name" value="P-loop_NTPase"/>
</dbReference>
<dbReference type="NCBIfam" id="NF002223">
    <property type="entry name" value="PRK01117.1"/>
    <property type="match status" value="1"/>
</dbReference>
<dbReference type="NCBIfam" id="TIGR00184">
    <property type="entry name" value="purA"/>
    <property type="match status" value="1"/>
</dbReference>
<dbReference type="PANTHER" id="PTHR11846">
    <property type="entry name" value="ADENYLOSUCCINATE SYNTHETASE"/>
    <property type="match status" value="1"/>
</dbReference>
<dbReference type="PANTHER" id="PTHR11846:SF0">
    <property type="entry name" value="ADENYLOSUCCINATE SYNTHETASE"/>
    <property type="match status" value="1"/>
</dbReference>
<dbReference type="Pfam" id="PF00709">
    <property type="entry name" value="Adenylsucc_synt"/>
    <property type="match status" value="1"/>
</dbReference>
<dbReference type="SMART" id="SM00788">
    <property type="entry name" value="Adenylsucc_synt"/>
    <property type="match status" value="1"/>
</dbReference>
<dbReference type="SUPFAM" id="SSF52540">
    <property type="entry name" value="P-loop containing nucleoside triphosphate hydrolases"/>
    <property type="match status" value="1"/>
</dbReference>
<dbReference type="PROSITE" id="PS01266">
    <property type="entry name" value="ADENYLOSUCCIN_SYN_1"/>
    <property type="match status" value="1"/>
</dbReference>
<dbReference type="PROSITE" id="PS00513">
    <property type="entry name" value="ADENYLOSUCCIN_SYN_2"/>
    <property type="match status" value="1"/>
</dbReference>
<evidence type="ECO:0000255" key="1">
    <source>
        <dbReference type="HAMAP-Rule" id="MF_00011"/>
    </source>
</evidence>
<name>PURA_RHILO</name>
<protein>
    <recommendedName>
        <fullName evidence="1">Adenylosuccinate synthetase</fullName>
        <shortName evidence="1">AMPSase</shortName>
        <shortName evidence="1">AdSS</shortName>
        <ecNumber evidence="1">6.3.4.4</ecNumber>
    </recommendedName>
    <alternativeName>
        <fullName evidence="1">IMP--aspartate ligase</fullName>
    </alternativeName>
</protein>
<feature type="chain" id="PRO_0000095218" description="Adenylosuccinate synthetase">
    <location>
        <begin position="1"/>
        <end position="432"/>
    </location>
</feature>
<feature type="active site" description="Proton acceptor" evidence="1">
    <location>
        <position position="13"/>
    </location>
</feature>
<feature type="active site" description="Proton donor" evidence="1">
    <location>
        <position position="41"/>
    </location>
</feature>
<feature type="binding site" evidence="1">
    <location>
        <begin position="12"/>
        <end position="18"/>
    </location>
    <ligand>
        <name>GTP</name>
        <dbReference type="ChEBI" id="CHEBI:37565"/>
    </ligand>
</feature>
<feature type="binding site" description="in other chain" evidence="1">
    <location>
        <begin position="13"/>
        <end position="16"/>
    </location>
    <ligand>
        <name>IMP</name>
        <dbReference type="ChEBI" id="CHEBI:58053"/>
        <note>ligand shared between dimeric partners</note>
    </ligand>
</feature>
<feature type="binding site" evidence="1">
    <location>
        <position position="13"/>
    </location>
    <ligand>
        <name>Mg(2+)</name>
        <dbReference type="ChEBI" id="CHEBI:18420"/>
    </ligand>
</feature>
<feature type="binding site" description="in other chain" evidence="1">
    <location>
        <begin position="38"/>
        <end position="41"/>
    </location>
    <ligand>
        <name>IMP</name>
        <dbReference type="ChEBI" id="CHEBI:58053"/>
        <note>ligand shared between dimeric partners</note>
    </ligand>
</feature>
<feature type="binding site" evidence="1">
    <location>
        <begin position="40"/>
        <end position="42"/>
    </location>
    <ligand>
        <name>GTP</name>
        <dbReference type="ChEBI" id="CHEBI:37565"/>
    </ligand>
</feature>
<feature type="binding site" evidence="1">
    <location>
        <position position="40"/>
    </location>
    <ligand>
        <name>Mg(2+)</name>
        <dbReference type="ChEBI" id="CHEBI:18420"/>
    </ligand>
</feature>
<feature type="binding site" description="in other chain" evidence="1">
    <location>
        <position position="132"/>
    </location>
    <ligand>
        <name>IMP</name>
        <dbReference type="ChEBI" id="CHEBI:58053"/>
        <note>ligand shared between dimeric partners</note>
    </ligand>
</feature>
<feature type="binding site" evidence="1">
    <location>
        <position position="146"/>
    </location>
    <ligand>
        <name>IMP</name>
        <dbReference type="ChEBI" id="CHEBI:58053"/>
        <note>ligand shared between dimeric partners</note>
    </ligand>
</feature>
<feature type="binding site" description="in other chain" evidence="1">
    <location>
        <position position="226"/>
    </location>
    <ligand>
        <name>IMP</name>
        <dbReference type="ChEBI" id="CHEBI:58053"/>
        <note>ligand shared between dimeric partners</note>
    </ligand>
</feature>
<feature type="binding site" description="in other chain" evidence="1">
    <location>
        <position position="241"/>
    </location>
    <ligand>
        <name>IMP</name>
        <dbReference type="ChEBI" id="CHEBI:58053"/>
        <note>ligand shared between dimeric partners</note>
    </ligand>
</feature>
<feature type="binding site" evidence="1">
    <location>
        <begin position="301"/>
        <end position="307"/>
    </location>
    <ligand>
        <name>substrate</name>
    </ligand>
</feature>
<feature type="binding site" description="in other chain" evidence="1">
    <location>
        <position position="305"/>
    </location>
    <ligand>
        <name>IMP</name>
        <dbReference type="ChEBI" id="CHEBI:58053"/>
        <note>ligand shared between dimeric partners</note>
    </ligand>
</feature>
<feature type="binding site" evidence="1">
    <location>
        <position position="307"/>
    </location>
    <ligand>
        <name>GTP</name>
        <dbReference type="ChEBI" id="CHEBI:37565"/>
    </ligand>
</feature>
<feature type="binding site" evidence="1">
    <location>
        <begin position="333"/>
        <end position="335"/>
    </location>
    <ligand>
        <name>GTP</name>
        <dbReference type="ChEBI" id="CHEBI:37565"/>
    </ligand>
</feature>
<feature type="binding site" evidence="1">
    <location>
        <begin position="415"/>
        <end position="417"/>
    </location>
    <ligand>
        <name>GTP</name>
        <dbReference type="ChEBI" id="CHEBI:37565"/>
    </ligand>
</feature>
<sequence length="432" mass="46671">MANVVVVGSQWGDEGKGKIVDWLSERADVVVRFQGGHNAGHTLVVDGKVYKLSLLPSGVVRQGKLSIIGNGVVFDPHAFVAEVAKLKAQGVEVTPDRLKIAENTALILSLHRELDGFREDAASNSGTKIGTTRRGIGPAYEDKVGRRAVRVMDLADLETLPLKVDRLLTHHNALRRGLGHGEVTHDAIMAELTSVADEILPYMDRVWKILDDKRRAGERILFEGAQGTLLDIDHGTYPFVTSSNTVAGQAAAGSGVGPGAIGYVLGITKAYTTRVGEGPFPTEQKNEIGEFLGTRGHEFGVVTGRKRRCGWFDAVLVRQAVAVNGIKGIALTKLDVLDGLDEIKVCTGYRLDGEMIDYLPASQGAQARVEPVYETLEGWKGTTAGARSWNDLPAQAVKYVRYIEELIGAPVALLSTSPERDDTILVTDPFQD</sequence>
<gene>
    <name evidence="1" type="primary">purA</name>
    <name type="ordered locus">mll3873</name>
</gene>